<protein>
    <recommendedName>
        <fullName evidence="1">DNA mismatch repair protein MutS</fullName>
    </recommendedName>
</protein>
<organism>
    <name type="scientific">Vibrio vulnificus (strain YJ016)</name>
    <dbReference type="NCBI Taxonomy" id="196600"/>
    <lineage>
        <taxon>Bacteria</taxon>
        <taxon>Pseudomonadati</taxon>
        <taxon>Pseudomonadota</taxon>
        <taxon>Gammaproteobacteria</taxon>
        <taxon>Vibrionales</taxon>
        <taxon>Vibrionaceae</taxon>
        <taxon>Vibrio</taxon>
    </lineage>
</organism>
<accession>Q7MHR2</accession>
<keyword id="KW-0067">ATP-binding</keyword>
<keyword id="KW-0227">DNA damage</keyword>
<keyword id="KW-0234">DNA repair</keyword>
<keyword id="KW-0238">DNA-binding</keyword>
<keyword id="KW-0547">Nucleotide-binding</keyword>
<name>MUTS_VIBVY</name>
<sequence length="853" mass="94485">MKAEQQHTPMMQQYLRLKAENPDILLFYRMGDFYELFYDDAKKASQLLDISLTKRGASAGEPIPMAGVPFHAVEGYLAKLVQLGESVAICEQVGDPATSKGPVERKVVRIVTPGTVTDEALLSERLDNLIAAIYHHNGKFGYATLDVTSGRFQLVEPQSEEAMAAELQRTSPRELLFPEDFEPVHLMTGRNGNRRRPVWEFELETAKQQLNQQFGTKDLVGFGVENAMLGLCAAGCLIQYVKDTQRTALPHIRALTYDRQDDSVILDAATRRNLELTQNLAGGSDNTLAAVLDRCATPMGSRMLKRWIHQPMRCITTREHRLDAIAELKEQALFSDIHPVVKQIGDIERILARLALRSARPRDLARLRHAMQQLPELAQTLSSLGNSHLKSLATAAAPMDDVCELLERAIKENPPVVIRDGGVIAEGYSADLDEWRDLADGATGYLEKLEEEERDRHGIDTLKVGYNNVHGFYIQVSRGQSHLVPPHYVRRQTLKNAERYIIPELKEHEDKVLNSKSKALAIEKQLWEELFDLLLPHLARLQELAAAVAQLDVLQNLAERADTLDYCRPNLTKDPVVHITAGRHPVVEQVTSDPFIANPIELNSQRKMLIITGPNMGGKSTYMRQTALIALMAHIGSYVPAESATIGSIDRIFTRIGASDDLASGRSTFMVEMTETANILHNATANSLVLMDEIGRGTSTYDGLSLAWASAHWLATQIGAMTLFATHYFELTELPNQLPHLANVHLDAVEHGDSIAFMHAVQEGAASKSYGLAVAGLAGVPKTVIKNARQKLSQLELLSAEGSQPKARTVDIANQLSLIPEPSEVEQALASIDPDDLTPRQALEALYRLKKML</sequence>
<proteinExistence type="inferred from homology"/>
<feature type="chain" id="PRO_0000115167" description="DNA mismatch repair protein MutS">
    <location>
        <begin position="1"/>
        <end position="853"/>
    </location>
</feature>
<feature type="binding site" evidence="1">
    <location>
        <begin position="613"/>
        <end position="620"/>
    </location>
    <ligand>
        <name>ATP</name>
        <dbReference type="ChEBI" id="CHEBI:30616"/>
    </ligand>
</feature>
<reference key="1">
    <citation type="journal article" date="2003" name="Genome Res.">
        <title>Comparative genome analysis of Vibrio vulnificus, a marine pathogen.</title>
        <authorList>
            <person name="Chen C.-Y."/>
            <person name="Wu K.-M."/>
            <person name="Chang Y.-C."/>
            <person name="Chang C.-H."/>
            <person name="Tsai H.-C."/>
            <person name="Liao T.-L."/>
            <person name="Liu Y.-M."/>
            <person name="Chen H.-J."/>
            <person name="Shen A.B.-T."/>
            <person name="Li J.-C."/>
            <person name="Su T.-L."/>
            <person name="Shao C.-P."/>
            <person name="Lee C.-T."/>
            <person name="Hor L.-I."/>
            <person name="Tsai S.-F."/>
        </authorList>
    </citation>
    <scope>NUCLEOTIDE SEQUENCE [LARGE SCALE GENOMIC DNA]</scope>
    <source>
        <strain>YJ016</strain>
    </source>
</reference>
<comment type="function">
    <text evidence="1">This protein is involved in the repair of mismatches in DNA. It is possible that it carries out the mismatch recognition step. This protein has a weak ATPase activity.</text>
</comment>
<comment type="similarity">
    <text evidence="1">Belongs to the DNA mismatch repair MutS family.</text>
</comment>
<comment type="sequence caution" evidence="2">
    <conflict type="erroneous initiation">
        <sequence resource="EMBL-CDS" id="BAC95571"/>
    </conflict>
</comment>
<dbReference type="EMBL" id="BA000037">
    <property type="protein sequence ID" value="BAC95571.1"/>
    <property type="status" value="ALT_INIT"/>
    <property type="molecule type" value="Genomic_DNA"/>
</dbReference>
<dbReference type="RefSeq" id="WP_043877315.1">
    <property type="nucleotide sequence ID" value="NC_005139.1"/>
</dbReference>
<dbReference type="SMR" id="Q7MHR2"/>
<dbReference type="STRING" id="672.VV93_v1c25180"/>
<dbReference type="KEGG" id="vvy:VV2806"/>
<dbReference type="PATRIC" id="fig|196600.6.peg.2798"/>
<dbReference type="eggNOG" id="COG0249">
    <property type="taxonomic scope" value="Bacteria"/>
</dbReference>
<dbReference type="HOGENOM" id="CLU_002472_4_0_6"/>
<dbReference type="Proteomes" id="UP000002675">
    <property type="component" value="Chromosome I"/>
</dbReference>
<dbReference type="GO" id="GO:0005829">
    <property type="term" value="C:cytosol"/>
    <property type="evidence" value="ECO:0007669"/>
    <property type="project" value="TreeGrafter"/>
</dbReference>
<dbReference type="GO" id="GO:0005524">
    <property type="term" value="F:ATP binding"/>
    <property type="evidence" value="ECO:0007669"/>
    <property type="project" value="UniProtKB-UniRule"/>
</dbReference>
<dbReference type="GO" id="GO:0140664">
    <property type="term" value="F:ATP-dependent DNA damage sensor activity"/>
    <property type="evidence" value="ECO:0007669"/>
    <property type="project" value="InterPro"/>
</dbReference>
<dbReference type="GO" id="GO:0003684">
    <property type="term" value="F:damaged DNA binding"/>
    <property type="evidence" value="ECO:0007669"/>
    <property type="project" value="UniProtKB-UniRule"/>
</dbReference>
<dbReference type="GO" id="GO:0030983">
    <property type="term" value="F:mismatched DNA binding"/>
    <property type="evidence" value="ECO:0007669"/>
    <property type="project" value="InterPro"/>
</dbReference>
<dbReference type="GO" id="GO:0006298">
    <property type="term" value="P:mismatch repair"/>
    <property type="evidence" value="ECO:0007669"/>
    <property type="project" value="UniProtKB-UniRule"/>
</dbReference>
<dbReference type="CDD" id="cd03284">
    <property type="entry name" value="ABC_MutS1"/>
    <property type="match status" value="1"/>
</dbReference>
<dbReference type="FunFam" id="1.10.1420.10:FF:000002">
    <property type="entry name" value="DNA mismatch repair protein MutS"/>
    <property type="match status" value="1"/>
</dbReference>
<dbReference type="FunFam" id="3.30.420.110:FF:000001">
    <property type="entry name" value="DNA mismatch repair protein MutS"/>
    <property type="match status" value="1"/>
</dbReference>
<dbReference type="FunFam" id="3.40.1170.10:FF:000001">
    <property type="entry name" value="DNA mismatch repair protein MutS"/>
    <property type="match status" value="1"/>
</dbReference>
<dbReference type="FunFam" id="3.40.50.300:FF:000283">
    <property type="entry name" value="DNA mismatch repair protein MutS"/>
    <property type="match status" value="1"/>
</dbReference>
<dbReference type="Gene3D" id="1.10.1420.10">
    <property type="match status" value="2"/>
</dbReference>
<dbReference type="Gene3D" id="6.10.140.430">
    <property type="match status" value="1"/>
</dbReference>
<dbReference type="Gene3D" id="3.40.1170.10">
    <property type="entry name" value="DNA repair protein MutS, domain I"/>
    <property type="match status" value="1"/>
</dbReference>
<dbReference type="Gene3D" id="3.30.420.110">
    <property type="entry name" value="MutS, connector domain"/>
    <property type="match status" value="1"/>
</dbReference>
<dbReference type="Gene3D" id="3.40.50.300">
    <property type="entry name" value="P-loop containing nucleotide triphosphate hydrolases"/>
    <property type="match status" value="1"/>
</dbReference>
<dbReference type="HAMAP" id="MF_00096">
    <property type="entry name" value="MutS"/>
    <property type="match status" value="1"/>
</dbReference>
<dbReference type="InterPro" id="IPR005748">
    <property type="entry name" value="DNA_mismatch_repair_MutS"/>
</dbReference>
<dbReference type="InterPro" id="IPR007695">
    <property type="entry name" value="DNA_mismatch_repair_MutS-lik_N"/>
</dbReference>
<dbReference type="InterPro" id="IPR017261">
    <property type="entry name" value="DNA_mismatch_repair_MutS/MSH"/>
</dbReference>
<dbReference type="InterPro" id="IPR000432">
    <property type="entry name" value="DNA_mismatch_repair_MutS_C"/>
</dbReference>
<dbReference type="InterPro" id="IPR007861">
    <property type="entry name" value="DNA_mismatch_repair_MutS_clamp"/>
</dbReference>
<dbReference type="InterPro" id="IPR007696">
    <property type="entry name" value="DNA_mismatch_repair_MutS_core"/>
</dbReference>
<dbReference type="InterPro" id="IPR016151">
    <property type="entry name" value="DNA_mismatch_repair_MutS_N"/>
</dbReference>
<dbReference type="InterPro" id="IPR036187">
    <property type="entry name" value="DNA_mismatch_repair_MutS_sf"/>
</dbReference>
<dbReference type="InterPro" id="IPR007860">
    <property type="entry name" value="DNA_mmatch_repair_MutS_con_dom"/>
</dbReference>
<dbReference type="InterPro" id="IPR045076">
    <property type="entry name" value="MutS"/>
</dbReference>
<dbReference type="InterPro" id="IPR036678">
    <property type="entry name" value="MutS_con_dom_sf"/>
</dbReference>
<dbReference type="InterPro" id="IPR027417">
    <property type="entry name" value="P-loop_NTPase"/>
</dbReference>
<dbReference type="NCBIfam" id="TIGR01070">
    <property type="entry name" value="mutS1"/>
    <property type="match status" value="1"/>
</dbReference>
<dbReference type="NCBIfam" id="NF003810">
    <property type="entry name" value="PRK05399.1"/>
    <property type="match status" value="1"/>
</dbReference>
<dbReference type="PANTHER" id="PTHR11361:SF34">
    <property type="entry name" value="DNA MISMATCH REPAIR PROTEIN MSH1, MITOCHONDRIAL"/>
    <property type="match status" value="1"/>
</dbReference>
<dbReference type="PANTHER" id="PTHR11361">
    <property type="entry name" value="DNA MISMATCH REPAIR PROTEIN MUTS FAMILY MEMBER"/>
    <property type="match status" value="1"/>
</dbReference>
<dbReference type="Pfam" id="PF01624">
    <property type="entry name" value="MutS_I"/>
    <property type="match status" value="1"/>
</dbReference>
<dbReference type="Pfam" id="PF05188">
    <property type="entry name" value="MutS_II"/>
    <property type="match status" value="1"/>
</dbReference>
<dbReference type="Pfam" id="PF05192">
    <property type="entry name" value="MutS_III"/>
    <property type="match status" value="1"/>
</dbReference>
<dbReference type="Pfam" id="PF05190">
    <property type="entry name" value="MutS_IV"/>
    <property type="match status" value="1"/>
</dbReference>
<dbReference type="Pfam" id="PF00488">
    <property type="entry name" value="MutS_V"/>
    <property type="match status" value="1"/>
</dbReference>
<dbReference type="PIRSF" id="PIRSF037677">
    <property type="entry name" value="DNA_mis_repair_Msh6"/>
    <property type="match status" value="1"/>
</dbReference>
<dbReference type="SMART" id="SM00534">
    <property type="entry name" value="MUTSac"/>
    <property type="match status" value="1"/>
</dbReference>
<dbReference type="SMART" id="SM00533">
    <property type="entry name" value="MUTSd"/>
    <property type="match status" value="1"/>
</dbReference>
<dbReference type="SUPFAM" id="SSF55271">
    <property type="entry name" value="DNA repair protein MutS, domain I"/>
    <property type="match status" value="1"/>
</dbReference>
<dbReference type="SUPFAM" id="SSF53150">
    <property type="entry name" value="DNA repair protein MutS, domain II"/>
    <property type="match status" value="1"/>
</dbReference>
<dbReference type="SUPFAM" id="SSF48334">
    <property type="entry name" value="DNA repair protein MutS, domain III"/>
    <property type="match status" value="1"/>
</dbReference>
<dbReference type="SUPFAM" id="SSF52540">
    <property type="entry name" value="P-loop containing nucleoside triphosphate hydrolases"/>
    <property type="match status" value="1"/>
</dbReference>
<dbReference type="PROSITE" id="PS00486">
    <property type="entry name" value="DNA_MISMATCH_REPAIR_2"/>
    <property type="match status" value="1"/>
</dbReference>
<evidence type="ECO:0000255" key="1">
    <source>
        <dbReference type="HAMAP-Rule" id="MF_00096"/>
    </source>
</evidence>
<evidence type="ECO:0000305" key="2"/>
<gene>
    <name evidence="1" type="primary">mutS</name>
    <name type="ordered locus">VV2806</name>
</gene>